<name>LIPB_ECOL6</name>
<proteinExistence type="inferred from homology"/>
<keyword id="KW-0012">Acyltransferase</keyword>
<keyword id="KW-0963">Cytoplasm</keyword>
<keyword id="KW-1185">Reference proteome</keyword>
<keyword id="KW-0808">Transferase</keyword>
<comment type="function">
    <text evidence="1">Catalyzes the transfer of endogenously produced octanoic acid from octanoyl-acyl-carrier-protein onto the lipoyl domains of lipoate-dependent enzymes. Lipoyl-ACP can also act as a substrate although octanoyl-ACP is likely to be the physiological substrate.</text>
</comment>
<comment type="catalytic activity">
    <reaction evidence="1">
        <text>octanoyl-[ACP] + L-lysyl-[protein] = N(6)-octanoyl-L-lysyl-[protein] + holo-[ACP] + H(+)</text>
        <dbReference type="Rhea" id="RHEA:17665"/>
        <dbReference type="Rhea" id="RHEA-COMP:9636"/>
        <dbReference type="Rhea" id="RHEA-COMP:9685"/>
        <dbReference type="Rhea" id="RHEA-COMP:9752"/>
        <dbReference type="Rhea" id="RHEA-COMP:9928"/>
        <dbReference type="ChEBI" id="CHEBI:15378"/>
        <dbReference type="ChEBI" id="CHEBI:29969"/>
        <dbReference type="ChEBI" id="CHEBI:64479"/>
        <dbReference type="ChEBI" id="CHEBI:78463"/>
        <dbReference type="ChEBI" id="CHEBI:78809"/>
        <dbReference type="EC" id="2.3.1.181"/>
    </reaction>
</comment>
<comment type="pathway">
    <text evidence="1">Protein modification; protein lipoylation via endogenous pathway; protein N(6)-(lipoyl)lysine from octanoyl-[acyl-carrier-protein]: step 1/2.</text>
</comment>
<comment type="subcellular location">
    <subcellularLocation>
        <location evidence="1">Cytoplasm</location>
    </subcellularLocation>
</comment>
<comment type="miscellaneous">
    <text evidence="1">In the reaction, the free carboxyl group of octanoic acid is attached via an amide linkage to the epsilon-amino group of a specific lysine residue of lipoyl domains of lipoate-dependent enzymes.</text>
</comment>
<comment type="similarity">
    <text evidence="1">Belongs to the LipB family.</text>
</comment>
<sequence>MYQDKILVRQLGLQPYEPISQAMHEFTDTRDDSTLDEIWLVEHYPVFTQGQAGKAEHILMPGDIPVIQSDRGGQVTYHGPGQQVMYVLLNLKRRKLGVRELVTLLEQTVVNTLAELGIEAHPRADAPGVYVGEKKICSLGLRIRRGCSFHGLALNVNMDLSPFLRINPCGYAGMEMAKISQWKPEATTNNIAPRLLENILALLNNPDFEYITA</sequence>
<feature type="chain" id="PRO_0000062836" description="Octanoyltransferase">
    <location>
        <begin position="1"/>
        <end position="213"/>
    </location>
</feature>
<feature type="domain" description="BPL/LPL catalytic" evidence="2">
    <location>
        <begin position="32"/>
        <end position="207"/>
    </location>
</feature>
<feature type="active site" description="Acyl-thioester intermediate" evidence="1">
    <location>
        <position position="169"/>
    </location>
</feature>
<feature type="binding site" evidence="1">
    <location>
        <begin position="71"/>
        <end position="78"/>
    </location>
    <ligand>
        <name>substrate</name>
    </ligand>
</feature>
<feature type="binding site" evidence="1">
    <location>
        <begin position="138"/>
        <end position="140"/>
    </location>
    <ligand>
        <name>substrate</name>
    </ligand>
</feature>
<feature type="binding site" evidence="1">
    <location>
        <begin position="151"/>
        <end position="153"/>
    </location>
    <ligand>
        <name>substrate</name>
    </ligand>
</feature>
<feature type="site" description="Lowers pKa of active site Cys" evidence="1">
    <location>
        <position position="135"/>
    </location>
</feature>
<protein>
    <recommendedName>
        <fullName evidence="1">Octanoyltransferase</fullName>
        <ecNumber evidence="1">2.3.1.181</ecNumber>
    </recommendedName>
    <alternativeName>
        <fullName evidence="1">Lipoate-protein ligase B</fullName>
    </alternativeName>
    <alternativeName>
        <fullName evidence="1">Lipoyl/octanoyl transferase</fullName>
    </alternativeName>
    <alternativeName>
        <fullName evidence="1">Octanoyl-[acyl-carrier-protein]-protein N-octanoyltransferase</fullName>
    </alternativeName>
</protein>
<accession>P60722</accession>
<accession>P30976</accession>
<accession>P77684</accession>
<accession>Q8XBQ2</accession>
<organism>
    <name type="scientific">Escherichia coli O6:H1 (strain CFT073 / ATCC 700928 / UPEC)</name>
    <dbReference type="NCBI Taxonomy" id="199310"/>
    <lineage>
        <taxon>Bacteria</taxon>
        <taxon>Pseudomonadati</taxon>
        <taxon>Pseudomonadota</taxon>
        <taxon>Gammaproteobacteria</taxon>
        <taxon>Enterobacterales</taxon>
        <taxon>Enterobacteriaceae</taxon>
        <taxon>Escherichia</taxon>
    </lineage>
</organism>
<evidence type="ECO:0000255" key="1">
    <source>
        <dbReference type="HAMAP-Rule" id="MF_00013"/>
    </source>
</evidence>
<evidence type="ECO:0000255" key="2">
    <source>
        <dbReference type="PROSITE-ProRule" id="PRU01067"/>
    </source>
</evidence>
<dbReference type="EC" id="2.3.1.181" evidence="1"/>
<dbReference type="EMBL" id="AE014075">
    <property type="protein sequence ID" value="AAN79193.1"/>
    <property type="molecule type" value="Genomic_DNA"/>
</dbReference>
<dbReference type="RefSeq" id="WP_000284027.1">
    <property type="nucleotide sequence ID" value="NZ_CP051263.1"/>
</dbReference>
<dbReference type="SMR" id="P60722"/>
<dbReference type="STRING" id="199310.c0720"/>
<dbReference type="GeneID" id="93776852"/>
<dbReference type="KEGG" id="ecc:c0720"/>
<dbReference type="eggNOG" id="COG0321">
    <property type="taxonomic scope" value="Bacteria"/>
</dbReference>
<dbReference type="HOGENOM" id="CLU_035168_3_1_6"/>
<dbReference type="BioCyc" id="ECOL199310:C0720-MONOMER"/>
<dbReference type="UniPathway" id="UPA00538">
    <property type="reaction ID" value="UER00592"/>
</dbReference>
<dbReference type="Proteomes" id="UP000001410">
    <property type="component" value="Chromosome"/>
</dbReference>
<dbReference type="GO" id="GO:0005737">
    <property type="term" value="C:cytoplasm"/>
    <property type="evidence" value="ECO:0007669"/>
    <property type="project" value="UniProtKB-SubCell"/>
</dbReference>
<dbReference type="GO" id="GO:0033819">
    <property type="term" value="F:lipoyl(octanoyl) transferase activity"/>
    <property type="evidence" value="ECO:0007669"/>
    <property type="project" value="UniProtKB-EC"/>
</dbReference>
<dbReference type="GO" id="GO:0036211">
    <property type="term" value="P:protein modification process"/>
    <property type="evidence" value="ECO:0007669"/>
    <property type="project" value="InterPro"/>
</dbReference>
<dbReference type="CDD" id="cd16444">
    <property type="entry name" value="LipB"/>
    <property type="match status" value="1"/>
</dbReference>
<dbReference type="FunFam" id="3.30.930.10:FF:000020">
    <property type="entry name" value="Octanoyltransferase"/>
    <property type="match status" value="1"/>
</dbReference>
<dbReference type="Gene3D" id="3.30.930.10">
    <property type="entry name" value="Bira Bifunctional Protein, Domain 2"/>
    <property type="match status" value="1"/>
</dbReference>
<dbReference type="HAMAP" id="MF_00013">
    <property type="entry name" value="LipB"/>
    <property type="match status" value="1"/>
</dbReference>
<dbReference type="InterPro" id="IPR045864">
    <property type="entry name" value="aa-tRNA-synth_II/BPL/LPL"/>
</dbReference>
<dbReference type="InterPro" id="IPR004143">
    <property type="entry name" value="BPL_LPL_catalytic"/>
</dbReference>
<dbReference type="InterPro" id="IPR000544">
    <property type="entry name" value="Octanoyltransferase"/>
</dbReference>
<dbReference type="InterPro" id="IPR020605">
    <property type="entry name" value="Octanoyltransferase_CS"/>
</dbReference>
<dbReference type="NCBIfam" id="TIGR00214">
    <property type="entry name" value="lipB"/>
    <property type="match status" value="1"/>
</dbReference>
<dbReference type="NCBIfam" id="NF010922">
    <property type="entry name" value="PRK14342.1"/>
    <property type="match status" value="1"/>
</dbReference>
<dbReference type="PANTHER" id="PTHR10993:SF7">
    <property type="entry name" value="LIPOYLTRANSFERASE 2, MITOCHONDRIAL-RELATED"/>
    <property type="match status" value="1"/>
</dbReference>
<dbReference type="PANTHER" id="PTHR10993">
    <property type="entry name" value="OCTANOYLTRANSFERASE"/>
    <property type="match status" value="1"/>
</dbReference>
<dbReference type="Pfam" id="PF21948">
    <property type="entry name" value="LplA-B_cat"/>
    <property type="match status" value="1"/>
</dbReference>
<dbReference type="PIRSF" id="PIRSF016262">
    <property type="entry name" value="LPLase"/>
    <property type="match status" value="1"/>
</dbReference>
<dbReference type="SUPFAM" id="SSF55681">
    <property type="entry name" value="Class II aaRS and biotin synthetases"/>
    <property type="match status" value="1"/>
</dbReference>
<dbReference type="PROSITE" id="PS51733">
    <property type="entry name" value="BPL_LPL_CATALYTIC"/>
    <property type="match status" value="1"/>
</dbReference>
<dbReference type="PROSITE" id="PS01313">
    <property type="entry name" value="LIPB"/>
    <property type="match status" value="1"/>
</dbReference>
<gene>
    <name evidence="1" type="primary">lipB</name>
    <name type="ordered locus">c0720</name>
</gene>
<reference key="1">
    <citation type="journal article" date="2002" name="Proc. Natl. Acad. Sci. U.S.A.">
        <title>Extensive mosaic structure revealed by the complete genome sequence of uropathogenic Escherichia coli.</title>
        <authorList>
            <person name="Welch R.A."/>
            <person name="Burland V."/>
            <person name="Plunkett G. III"/>
            <person name="Redford P."/>
            <person name="Roesch P."/>
            <person name="Rasko D."/>
            <person name="Buckles E.L."/>
            <person name="Liou S.-R."/>
            <person name="Boutin A."/>
            <person name="Hackett J."/>
            <person name="Stroud D."/>
            <person name="Mayhew G.F."/>
            <person name="Rose D.J."/>
            <person name="Zhou S."/>
            <person name="Schwartz D.C."/>
            <person name="Perna N.T."/>
            <person name="Mobley H.L.T."/>
            <person name="Donnenberg M.S."/>
            <person name="Blattner F.R."/>
        </authorList>
    </citation>
    <scope>NUCLEOTIDE SEQUENCE [LARGE SCALE GENOMIC DNA]</scope>
    <source>
        <strain>CFT073 / ATCC 700928 / UPEC</strain>
    </source>
</reference>